<accession>Q055C2</accession>
<evidence type="ECO:0000255" key="1">
    <source>
        <dbReference type="HAMAP-Rule" id="MF_00075"/>
    </source>
</evidence>
<reference key="1">
    <citation type="journal article" date="2006" name="Proc. Natl. Acad. Sci. U.S.A.">
        <title>Genome reduction in Leptospira borgpetersenii reflects limited transmission potential.</title>
        <authorList>
            <person name="Bulach D.M."/>
            <person name="Zuerner R.L."/>
            <person name="Wilson P."/>
            <person name="Seemann T."/>
            <person name="McGrath A."/>
            <person name="Cullen P.A."/>
            <person name="Davis J."/>
            <person name="Johnson M."/>
            <person name="Kuczek E."/>
            <person name="Alt D.P."/>
            <person name="Peterson-Burch B."/>
            <person name="Coppel R.L."/>
            <person name="Rood J.I."/>
            <person name="Davies J.K."/>
            <person name="Adler B."/>
        </authorList>
    </citation>
    <scope>NUCLEOTIDE SEQUENCE [LARGE SCALE GENOMIC DNA]</scope>
    <source>
        <strain>L550</strain>
    </source>
</reference>
<sequence>MAKEEAITVDGTVLEPLPNAMFRVELENGHKVLAHISGKMRMHYIRILPGDKVTVELSPYDLSKGRITYRKK</sequence>
<comment type="function">
    <text evidence="1">One of the essential components for the initiation of protein synthesis. Stabilizes the binding of IF-2 and IF-3 on the 30S subunit to which N-formylmethionyl-tRNA(fMet) subsequently binds. Helps modulate mRNA selection, yielding the 30S pre-initiation complex (PIC). Upon addition of the 50S ribosomal subunit IF-1, IF-2 and IF-3 are released leaving the mature 70S translation initiation complex.</text>
</comment>
<comment type="subunit">
    <text evidence="1">Component of the 30S ribosomal translation pre-initiation complex which assembles on the 30S ribosome in the order IF-2 and IF-3, IF-1 and N-formylmethionyl-tRNA(fMet); mRNA recruitment can occur at any time during PIC assembly.</text>
</comment>
<comment type="subcellular location">
    <subcellularLocation>
        <location evidence="1">Cytoplasm</location>
    </subcellularLocation>
</comment>
<comment type="similarity">
    <text evidence="1">Belongs to the IF-1 family.</text>
</comment>
<organism>
    <name type="scientific">Leptospira borgpetersenii serovar Hardjo-bovis (strain L550)</name>
    <dbReference type="NCBI Taxonomy" id="355276"/>
    <lineage>
        <taxon>Bacteria</taxon>
        <taxon>Pseudomonadati</taxon>
        <taxon>Spirochaetota</taxon>
        <taxon>Spirochaetia</taxon>
        <taxon>Leptospirales</taxon>
        <taxon>Leptospiraceae</taxon>
        <taxon>Leptospira</taxon>
    </lineage>
</organism>
<dbReference type="EMBL" id="CP000348">
    <property type="protein sequence ID" value="ABJ78033.1"/>
    <property type="molecule type" value="Genomic_DNA"/>
</dbReference>
<dbReference type="EMBL" id="CP000348">
    <property type="protein sequence ID" value="ABJ78073.1"/>
    <property type="molecule type" value="Genomic_DNA"/>
</dbReference>
<dbReference type="RefSeq" id="WP_001040194.1">
    <property type="nucleotide sequence ID" value="NC_008508.1"/>
</dbReference>
<dbReference type="SMR" id="Q055C2"/>
<dbReference type="GeneID" id="34315486"/>
<dbReference type="KEGG" id="lbl:LBL_0435"/>
<dbReference type="KEGG" id="lbl:LBL_0475"/>
<dbReference type="HOGENOM" id="CLU_151267_1_0_12"/>
<dbReference type="GO" id="GO:0005829">
    <property type="term" value="C:cytosol"/>
    <property type="evidence" value="ECO:0007669"/>
    <property type="project" value="TreeGrafter"/>
</dbReference>
<dbReference type="GO" id="GO:0043022">
    <property type="term" value="F:ribosome binding"/>
    <property type="evidence" value="ECO:0007669"/>
    <property type="project" value="UniProtKB-UniRule"/>
</dbReference>
<dbReference type="GO" id="GO:0019843">
    <property type="term" value="F:rRNA binding"/>
    <property type="evidence" value="ECO:0007669"/>
    <property type="project" value="UniProtKB-UniRule"/>
</dbReference>
<dbReference type="GO" id="GO:0003743">
    <property type="term" value="F:translation initiation factor activity"/>
    <property type="evidence" value="ECO:0007669"/>
    <property type="project" value="UniProtKB-UniRule"/>
</dbReference>
<dbReference type="CDD" id="cd04451">
    <property type="entry name" value="S1_IF1"/>
    <property type="match status" value="1"/>
</dbReference>
<dbReference type="FunFam" id="2.40.50.140:FF:000002">
    <property type="entry name" value="Translation initiation factor IF-1"/>
    <property type="match status" value="1"/>
</dbReference>
<dbReference type="Gene3D" id="2.40.50.140">
    <property type="entry name" value="Nucleic acid-binding proteins"/>
    <property type="match status" value="1"/>
</dbReference>
<dbReference type="HAMAP" id="MF_00075">
    <property type="entry name" value="IF_1"/>
    <property type="match status" value="1"/>
</dbReference>
<dbReference type="InterPro" id="IPR012340">
    <property type="entry name" value="NA-bd_OB-fold"/>
</dbReference>
<dbReference type="InterPro" id="IPR006196">
    <property type="entry name" value="RNA-binding_domain_S1_IF1"/>
</dbReference>
<dbReference type="InterPro" id="IPR003029">
    <property type="entry name" value="S1_domain"/>
</dbReference>
<dbReference type="InterPro" id="IPR004368">
    <property type="entry name" value="TIF_IF1"/>
</dbReference>
<dbReference type="NCBIfam" id="TIGR00008">
    <property type="entry name" value="infA"/>
    <property type="match status" value="1"/>
</dbReference>
<dbReference type="PANTHER" id="PTHR33370">
    <property type="entry name" value="TRANSLATION INITIATION FACTOR IF-1, CHLOROPLASTIC"/>
    <property type="match status" value="1"/>
</dbReference>
<dbReference type="PANTHER" id="PTHR33370:SF1">
    <property type="entry name" value="TRANSLATION INITIATION FACTOR IF-1, CHLOROPLASTIC"/>
    <property type="match status" value="1"/>
</dbReference>
<dbReference type="Pfam" id="PF01176">
    <property type="entry name" value="eIF-1a"/>
    <property type="match status" value="1"/>
</dbReference>
<dbReference type="SMART" id="SM00316">
    <property type="entry name" value="S1"/>
    <property type="match status" value="1"/>
</dbReference>
<dbReference type="SUPFAM" id="SSF50249">
    <property type="entry name" value="Nucleic acid-binding proteins"/>
    <property type="match status" value="1"/>
</dbReference>
<dbReference type="PROSITE" id="PS50832">
    <property type="entry name" value="S1_IF1_TYPE"/>
    <property type="match status" value="1"/>
</dbReference>
<keyword id="KW-0963">Cytoplasm</keyword>
<keyword id="KW-0396">Initiation factor</keyword>
<keyword id="KW-0648">Protein biosynthesis</keyword>
<keyword id="KW-0694">RNA-binding</keyword>
<keyword id="KW-0699">rRNA-binding</keyword>
<protein>
    <recommendedName>
        <fullName evidence="1">Translation initiation factor IF-1</fullName>
    </recommendedName>
</protein>
<gene>
    <name evidence="1" type="primary">infA1</name>
    <name type="synonym">infA-1</name>
    <name type="ordered locus">LBL_0435</name>
</gene>
<gene>
    <name evidence="1" type="primary">infA2</name>
    <name type="synonym">infA</name>
    <name type="ordered locus">LBL_0475</name>
</gene>
<name>IF1_LEPBL</name>
<proteinExistence type="inferred from homology"/>
<feature type="chain" id="PRO_0000338853" description="Translation initiation factor IF-1">
    <location>
        <begin position="1"/>
        <end position="72"/>
    </location>
</feature>
<feature type="domain" description="S1-like" evidence="1">
    <location>
        <begin position="1"/>
        <end position="72"/>
    </location>
</feature>